<feature type="chain" id="PRO_1000136248" description="L-carnitine CoA-transferase">
    <location>
        <begin position="1"/>
        <end position="405"/>
    </location>
</feature>
<feature type="active site" description="Nucleophile" evidence="1">
    <location>
        <position position="169"/>
    </location>
</feature>
<feature type="binding site" evidence="1">
    <location>
        <position position="97"/>
    </location>
    <ligand>
        <name>CoA</name>
        <dbReference type="ChEBI" id="CHEBI:57287"/>
    </ligand>
</feature>
<feature type="binding site" evidence="1">
    <location>
        <position position="104"/>
    </location>
    <ligand>
        <name>CoA</name>
        <dbReference type="ChEBI" id="CHEBI:57287"/>
    </ligand>
</feature>
<comment type="function">
    <text evidence="1">Catalyzes the reversible transfer of the CoA moiety from gamma-butyrobetainyl-CoA to L-carnitine to generate L-carnitinyl-CoA and gamma-butyrobetaine. Is also able to catalyze the reversible transfer of the CoA moiety from gamma-butyrobetainyl-CoA or L-carnitinyl-CoA to crotonobetaine to generate crotonobetainyl-CoA.</text>
</comment>
<comment type="catalytic activity">
    <reaction evidence="1">
        <text>crotonobetainyl-CoA + (R)-carnitine = crotonobetaine + (R)-carnitinyl-CoA</text>
        <dbReference type="Rhea" id="RHEA:28526"/>
        <dbReference type="ChEBI" id="CHEBI:16347"/>
        <dbReference type="ChEBI" id="CHEBI:17237"/>
        <dbReference type="ChEBI" id="CHEBI:60932"/>
        <dbReference type="ChEBI" id="CHEBI:60933"/>
        <dbReference type="EC" id="2.8.3.21"/>
    </reaction>
</comment>
<comment type="catalytic activity">
    <reaction evidence="1">
        <text>4-(trimethylamino)butanoyl-CoA + (R)-carnitine = (R)-carnitinyl-CoA + 4-(trimethylamino)butanoate</text>
        <dbReference type="Rhea" id="RHEA:28418"/>
        <dbReference type="ChEBI" id="CHEBI:16244"/>
        <dbReference type="ChEBI" id="CHEBI:16347"/>
        <dbReference type="ChEBI" id="CHEBI:60932"/>
        <dbReference type="ChEBI" id="CHEBI:61513"/>
        <dbReference type="EC" id="2.8.3.21"/>
    </reaction>
</comment>
<comment type="pathway">
    <text evidence="1">Amine and polyamine metabolism; carnitine metabolism.</text>
</comment>
<comment type="subunit">
    <text evidence="1">Homodimer.</text>
</comment>
<comment type="subcellular location">
    <subcellularLocation>
        <location evidence="1">Cytoplasm</location>
    </subcellularLocation>
</comment>
<comment type="similarity">
    <text evidence="1">Belongs to the CoA-transferase III family. CaiB subfamily.</text>
</comment>
<name>CAIB_ECO8A</name>
<dbReference type="EC" id="2.8.3.21" evidence="1"/>
<dbReference type="EMBL" id="CU928160">
    <property type="protein sequence ID" value="CAQ96930.1"/>
    <property type="molecule type" value="Genomic_DNA"/>
</dbReference>
<dbReference type="RefSeq" id="WP_000349932.1">
    <property type="nucleotide sequence ID" value="NC_011741.1"/>
</dbReference>
<dbReference type="SMR" id="B7M0D5"/>
<dbReference type="GeneID" id="75169937"/>
<dbReference type="KEGG" id="ecr:ECIAI1_0040"/>
<dbReference type="HOGENOM" id="CLU_033975_2_0_6"/>
<dbReference type="UniPathway" id="UPA00117"/>
<dbReference type="GO" id="GO:0005737">
    <property type="term" value="C:cytoplasm"/>
    <property type="evidence" value="ECO:0007669"/>
    <property type="project" value="UniProtKB-SubCell"/>
</dbReference>
<dbReference type="GO" id="GO:0008735">
    <property type="term" value="F:L-carnitine CoA-transferase activity"/>
    <property type="evidence" value="ECO:0007669"/>
    <property type="project" value="RHEA"/>
</dbReference>
<dbReference type="GO" id="GO:0009437">
    <property type="term" value="P:carnitine metabolic process"/>
    <property type="evidence" value="ECO:0007669"/>
    <property type="project" value="UniProtKB-UniRule"/>
</dbReference>
<dbReference type="FunFam" id="3.30.1540.10:FF:000001">
    <property type="entry name" value="L-carnitine CoA-transferase"/>
    <property type="match status" value="1"/>
</dbReference>
<dbReference type="Gene3D" id="3.40.50.10540">
    <property type="entry name" value="Crotonobetainyl-coa:carnitine coa-transferase, domain 1"/>
    <property type="match status" value="1"/>
</dbReference>
<dbReference type="Gene3D" id="3.30.1540.10">
    <property type="entry name" value="formyl-coa transferase, domain 3"/>
    <property type="match status" value="1"/>
</dbReference>
<dbReference type="HAMAP" id="MF_01050">
    <property type="entry name" value="CaiB"/>
    <property type="match status" value="1"/>
</dbReference>
<dbReference type="InterPro" id="IPR050509">
    <property type="entry name" value="CoA-transferase_III"/>
</dbReference>
<dbReference type="InterPro" id="IPR023452">
    <property type="entry name" value="CoA-Trfase_CaiB"/>
</dbReference>
<dbReference type="InterPro" id="IPR003673">
    <property type="entry name" value="CoA-Trfase_fam_III"/>
</dbReference>
<dbReference type="InterPro" id="IPR044855">
    <property type="entry name" value="CoA-Trfase_III_dom3_sf"/>
</dbReference>
<dbReference type="InterPro" id="IPR023606">
    <property type="entry name" value="CoA-Trfase_III_dom_1_sf"/>
</dbReference>
<dbReference type="NCBIfam" id="NF002914">
    <property type="entry name" value="PRK03525.1"/>
    <property type="match status" value="1"/>
</dbReference>
<dbReference type="PANTHER" id="PTHR48228:SF6">
    <property type="entry name" value="L-CARNITINE COA-TRANSFERASE"/>
    <property type="match status" value="1"/>
</dbReference>
<dbReference type="PANTHER" id="PTHR48228">
    <property type="entry name" value="SUCCINYL-COA--D-CITRAMALATE COA-TRANSFERASE"/>
    <property type="match status" value="1"/>
</dbReference>
<dbReference type="Pfam" id="PF02515">
    <property type="entry name" value="CoA_transf_3"/>
    <property type="match status" value="1"/>
</dbReference>
<dbReference type="SUPFAM" id="SSF89796">
    <property type="entry name" value="CoA-transferase family III (CaiB/BaiF)"/>
    <property type="match status" value="1"/>
</dbReference>
<evidence type="ECO:0000255" key="1">
    <source>
        <dbReference type="HAMAP-Rule" id="MF_01050"/>
    </source>
</evidence>
<reference key="1">
    <citation type="journal article" date="2009" name="PLoS Genet.">
        <title>Organised genome dynamics in the Escherichia coli species results in highly diverse adaptive paths.</title>
        <authorList>
            <person name="Touchon M."/>
            <person name="Hoede C."/>
            <person name="Tenaillon O."/>
            <person name="Barbe V."/>
            <person name="Baeriswyl S."/>
            <person name="Bidet P."/>
            <person name="Bingen E."/>
            <person name="Bonacorsi S."/>
            <person name="Bouchier C."/>
            <person name="Bouvet O."/>
            <person name="Calteau A."/>
            <person name="Chiapello H."/>
            <person name="Clermont O."/>
            <person name="Cruveiller S."/>
            <person name="Danchin A."/>
            <person name="Diard M."/>
            <person name="Dossat C."/>
            <person name="Karoui M.E."/>
            <person name="Frapy E."/>
            <person name="Garry L."/>
            <person name="Ghigo J.M."/>
            <person name="Gilles A.M."/>
            <person name="Johnson J."/>
            <person name="Le Bouguenec C."/>
            <person name="Lescat M."/>
            <person name="Mangenot S."/>
            <person name="Martinez-Jehanne V."/>
            <person name="Matic I."/>
            <person name="Nassif X."/>
            <person name="Oztas S."/>
            <person name="Petit M.A."/>
            <person name="Pichon C."/>
            <person name="Rouy Z."/>
            <person name="Ruf C.S."/>
            <person name="Schneider D."/>
            <person name="Tourret J."/>
            <person name="Vacherie B."/>
            <person name="Vallenet D."/>
            <person name="Medigue C."/>
            <person name="Rocha E.P.C."/>
            <person name="Denamur E."/>
        </authorList>
    </citation>
    <scope>NUCLEOTIDE SEQUENCE [LARGE SCALE GENOMIC DNA]</scope>
    <source>
        <strain>IAI1</strain>
    </source>
</reference>
<organism>
    <name type="scientific">Escherichia coli O8 (strain IAI1)</name>
    <dbReference type="NCBI Taxonomy" id="585034"/>
    <lineage>
        <taxon>Bacteria</taxon>
        <taxon>Pseudomonadati</taxon>
        <taxon>Pseudomonadota</taxon>
        <taxon>Gammaproteobacteria</taxon>
        <taxon>Enterobacterales</taxon>
        <taxon>Enterobacteriaceae</taxon>
        <taxon>Escherichia</taxon>
    </lineage>
</organism>
<accession>B7M0D5</accession>
<gene>
    <name evidence="1" type="primary">caiB</name>
    <name type="ordered locus">ECIAI1_0040</name>
</gene>
<keyword id="KW-0963">Cytoplasm</keyword>
<keyword id="KW-0808">Transferase</keyword>
<sequence length="405" mass="45097">MDHLPMPKFGPLAGLRVVFSGIEIAGPFAGQMFAEWGAEVIWIENVAWADTIRVQPNYPQLSRRNLHALSLNIFKDEGREAFLKLMETTDIFIEASKGPAFARRGITDEVLWQHNPKLVIAHLSGFGQYGTEEYTNLPAYNTIAQAFSGYLIQNGDVDQPMPAFPYTADYFSGLTATTAALAALHKVRETGKGESIDIAMYEVMLRMGQYFMMDYFNGGEMCPRMSKGKDPYYAGCGLYKCADGYIVMELVGITQIEECFKDIGLAHLLGTPEIPEGTQLIHRIECPYGPLVEEKLDAWLAAHTIAEVKERFAELNIACAKVLTVPELESNPQYVARESITQWQTMDGRTCKGPNIMPKFKNNPGQIWRGMPSHGMDTAAILKNIGYSENDIQELVSKGLAKVED</sequence>
<proteinExistence type="inferred from homology"/>
<protein>
    <recommendedName>
        <fullName evidence="1">L-carnitine CoA-transferase</fullName>
        <ecNumber evidence="1">2.8.3.21</ecNumber>
    </recommendedName>
    <alternativeName>
        <fullName evidence="1">Crotonobetainyl-CoA:carnitine CoA-transferase</fullName>
    </alternativeName>
</protein>